<protein>
    <recommendedName>
        <fullName evidence="2">Protein C</fullName>
    </recommendedName>
</protein>
<feature type="chain" id="PRO_0000432061" description="Protein C">
    <location>
        <begin position="1"/>
        <end position="221"/>
    </location>
</feature>
<feature type="region of interest" description="Disordered" evidence="1">
    <location>
        <begin position="75"/>
        <end position="149"/>
    </location>
</feature>
<feature type="region of interest" description="Disordered" evidence="1">
    <location>
        <begin position="183"/>
        <end position="221"/>
    </location>
</feature>
<feature type="compositionally biased region" description="Polar residues" evidence="1">
    <location>
        <begin position="84"/>
        <end position="101"/>
    </location>
</feature>
<feature type="compositionally biased region" description="Basic and acidic residues" evidence="1">
    <location>
        <begin position="116"/>
        <end position="133"/>
    </location>
</feature>
<feature type="compositionally biased region" description="Polar residues" evidence="1">
    <location>
        <begin position="183"/>
        <end position="193"/>
    </location>
</feature>
<feature type="compositionally biased region" description="Polar residues" evidence="1">
    <location>
        <begin position="207"/>
        <end position="221"/>
    </location>
</feature>
<proteinExistence type="predicted"/>
<organismHost>
    <name type="scientific">Tupaia</name>
    <dbReference type="NCBI Taxonomy" id="9394"/>
</organismHost>
<reference key="1">
    <citation type="journal article" date="2005" name="J. Virol.">
        <title>Characterization of the Tupaia rhabdovirus genome reveals a long open reading frame overlapping with P and a novel gene encoding a small hydrophobic protein.</title>
        <authorList>
            <person name="Springfeld C."/>
            <person name="Darai G."/>
            <person name="Cattaneo R."/>
        </authorList>
    </citation>
    <scope>NUCLEOTIDE SEQUENCE [GENOMIC RNA / MRNA]</scope>
</reference>
<keyword id="KW-0024">Alternative initiation</keyword>
<keyword id="KW-1185">Reference proteome</keyword>
<name>C_TUPVT</name>
<gene>
    <name evidence="2" type="primary">C</name>
</gene>
<evidence type="ECO:0000256" key="1">
    <source>
        <dbReference type="SAM" id="MobiDB-lite"/>
    </source>
</evidence>
<evidence type="ECO:0000303" key="2">
    <source>
    </source>
</evidence>
<evidence type="ECO:0000305" key="3"/>
<dbReference type="EMBL" id="AY840978">
    <property type="protein sequence ID" value="AAX47598.1"/>
    <property type="molecule type" value="Genomic_RNA"/>
</dbReference>
<dbReference type="RefSeq" id="YP_238530.1">
    <property type="nucleotide sequence ID" value="NC_007020.1"/>
</dbReference>
<dbReference type="Proteomes" id="UP000029771">
    <property type="component" value="Segment"/>
</dbReference>
<organism>
    <name type="scientific">Tupaia virus (isolate Tupaia/Thailand/-/1986)</name>
    <name type="common">TUPV</name>
    <dbReference type="NCBI Taxonomy" id="1560034"/>
    <lineage>
        <taxon>Viruses</taxon>
        <taxon>Riboviria</taxon>
        <taxon>Orthornavirae</taxon>
        <taxon>Negarnaviricota</taxon>
        <taxon>Haploviricotina</taxon>
        <taxon>Monjiviricetes</taxon>
        <taxon>Mononegavirales</taxon>
        <taxon>Rhabdoviridae</taxon>
        <taxon>Alpharhabdovirinae</taxon>
        <taxon>Tupavirus</taxon>
        <taxon>Tupavirus tupaia</taxon>
    </lineage>
</organism>
<comment type="function">
    <text evidence="3">Does not belong to rhabdoviridae replication core genes, and is specific to sigma virus: protein C is presumably involved in host-virus interactions.</text>
</comment>
<comment type="alternative products">
    <event type="alternative initiation"/>
    <isoform>
        <id>Q4VKV6-1</id>
        <name>Protein C</name>
        <sequence type="displayed"/>
    </isoform>
    <isoform>
        <id>Q4VKV7-1</id>
        <name>Phosphoprotein</name>
        <sequence type="external"/>
    </isoform>
</comment>
<accession>Q4VKV6</accession>
<sequence>MTSQRFQELLKNVKTNLGSVWVEFRSSVEERLKHPHIWKIIDREQLATILMFFLGIPKMFRLSQNMKIRQMRNMRKPGVMEMTPDTNQTEQPCPSQMTNTETSKEPESVSLNSSTKDGDLDPNKQMKNLRRDSSSSQESADLEEDHRMLGGRMRMIFKRRQGMRKKSQSLSHLRSQAVYQDTTEAAISPSTWKSFWPPQLRLRDDNSWSSVNLSQTDPTKN</sequence>